<feature type="chain" id="PRO_0000203789" description="Hut operon positive regulatory protein">
    <location>
        <begin position="1"/>
        <end position="146"/>
    </location>
</feature>
<dbReference type="EMBL" id="AE016877">
    <property type="protein sequence ID" value="AAP10582.1"/>
    <property type="molecule type" value="Genomic_DNA"/>
</dbReference>
<dbReference type="RefSeq" id="NP_833381.1">
    <property type="nucleotide sequence ID" value="NC_004722.1"/>
</dbReference>
<dbReference type="RefSeq" id="WP_000926516.1">
    <property type="nucleotide sequence ID" value="NZ_CP138336.1"/>
</dbReference>
<dbReference type="SMR" id="Q81AC5"/>
<dbReference type="STRING" id="226900.BC_3653"/>
<dbReference type="GeneID" id="93007528"/>
<dbReference type="KEGG" id="bce:BC3653"/>
<dbReference type="PATRIC" id="fig|226900.8.peg.3755"/>
<dbReference type="HOGENOM" id="CLU_148478_0_0_9"/>
<dbReference type="OrthoDB" id="2388985at2"/>
<dbReference type="Proteomes" id="UP000001417">
    <property type="component" value="Chromosome"/>
</dbReference>
<dbReference type="GO" id="GO:0003729">
    <property type="term" value="F:mRNA binding"/>
    <property type="evidence" value="ECO:0007669"/>
    <property type="project" value="UniProtKB-UniRule"/>
</dbReference>
<dbReference type="GO" id="GO:0006547">
    <property type="term" value="P:L-histidine metabolic process"/>
    <property type="evidence" value="ECO:0007669"/>
    <property type="project" value="UniProtKB-UniRule"/>
</dbReference>
<dbReference type="GO" id="GO:0010628">
    <property type="term" value="P:positive regulation of gene expression"/>
    <property type="evidence" value="ECO:0007669"/>
    <property type="project" value="UniProtKB-UniRule"/>
</dbReference>
<dbReference type="FunFam" id="3.40.1510.10:FF:000001">
    <property type="entry name" value="Hut operon positive regulatory protein"/>
    <property type="match status" value="1"/>
</dbReference>
<dbReference type="Gene3D" id="3.40.1510.10">
    <property type="entry name" value="Hut operon regulatory protein HutP"/>
    <property type="match status" value="1"/>
</dbReference>
<dbReference type="HAMAP" id="MF_00779">
    <property type="entry name" value="HutP"/>
    <property type="match status" value="1"/>
</dbReference>
<dbReference type="InterPro" id="IPR015111">
    <property type="entry name" value="Regulatory_HutP"/>
</dbReference>
<dbReference type="InterPro" id="IPR023552">
    <property type="entry name" value="Regulatory_HutP_bacillales"/>
</dbReference>
<dbReference type="InterPro" id="IPR036482">
    <property type="entry name" value="Regulatory_HutP_sf"/>
</dbReference>
<dbReference type="NCBIfam" id="NF002838">
    <property type="entry name" value="PRK03065.1"/>
    <property type="match status" value="1"/>
</dbReference>
<dbReference type="Pfam" id="PF09021">
    <property type="entry name" value="HutP"/>
    <property type="match status" value="1"/>
</dbReference>
<dbReference type="SUPFAM" id="SSF111064">
    <property type="entry name" value="Hut operon positive regulatory protein HutP"/>
    <property type="match status" value="1"/>
</dbReference>
<comment type="function">
    <text evidence="1">Antiterminator that binds to cis-acting regulatory sequences on the mRNA in the presence of histidine, thereby suppressing transcription termination and activating the hut operon for histidine utilization.</text>
</comment>
<comment type="subunit">
    <text evidence="1">Homohexamer.</text>
</comment>
<comment type="similarity">
    <text evidence="2">Belongs to the HutP family.</text>
</comment>
<organism>
    <name type="scientific">Bacillus cereus (strain ATCC 14579 / DSM 31 / CCUG 7414 / JCM 2152 / NBRC 15305 / NCIMB 9373 / NCTC 2599 / NRRL B-3711)</name>
    <dbReference type="NCBI Taxonomy" id="226900"/>
    <lineage>
        <taxon>Bacteria</taxon>
        <taxon>Bacillati</taxon>
        <taxon>Bacillota</taxon>
        <taxon>Bacilli</taxon>
        <taxon>Bacillales</taxon>
        <taxon>Bacillaceae</taxon>
        <taxon>Bacillus</taxon>
        <taxon>Bacillus cereus group</taxon>
    </lineage>
</organism>
<gene>
    <name type="primary">hutP</name>
    <name type="ordered locus">BC_3653</name>
</gene>
<name>HUTP_BACCR</name>
<sequence>MLLQGTHRIGRMAMLLALADENESPVLSIPKGWKYCTGKVGSMNSQKVVAAMETAAKSNQVIETDVYRETHALYHAIMEALYGVTRGQIQLADVLRTVGLRFAIVRGTPYDGKKEGEWVAVALYGTIGAPVKGSEHEAIGLGINHI</sequence>
<keyword id="KW-0010">Activator</keyword>
<keyword id="KW-0369">Histidine metabolism</keyword>
<keyword id="KW-1185">Reference proteome</keyword>
<keyword id="KW-0694">RNA-binding</keyword>
<keyword id="KW-0804">Transcription</keyword>
<keyword id="KW-0805">Transcription regulation</keyword>
<evidence type="ECO:0000250" key="1"/>
<evidence type="ECO:0000305" key="2"/>
<protein>
    <recommendedName>
        <fullName>Hut operon positive regulatory protein</fullName>
    </recommendedName>
</protein>
<reference key="1">
    <citation type="journal article" date="2003" name="Nature">
        <title>Genome sequence of Bacillus cereus and comparative analysis with Bacillus anthracis.</title>
        <authorList>
            <person name="Ivanova N."/>
            <person name="Sorokin A."/>
            <person name="Anderson I."/>
            <person name="Galleron N."/>
            <person name="Candelon B."/>
            <person name="Kapatral V."/>
            <person name="Bhattacharyya A."/>
            <person name="Reznik G."/>
            <person name="Mikhailova N."/>
            <person name="Lapidus A."/>
            <person name="Chu L."/>
            <person name="Mazur M."/>
            <person name="Goltsman E."/>
            <person name="Larsen N."/>
            <person name="D'Souza M."/>
            <person name="Walunas T."/>
            <person name="Grechkin Y."/>
            <person name="Pusch G."/>
            <person name="Haselkorn R."/>
            <person name="Fonstein M."/>
            <person name="Ehrlich S.D."/>
            <person name="Overbeek R."/>
            <person name="Kyrpides N.C."/>
        </authorList>
    </citation>
    <scope>NUCLEOTIDE SEQUENCE [LARGE SCALE GENOMIC DNA]</scope>
    <source>
        <strain>ATCC 14579 / DSM 31 / CCUG 7414 / JCM 2152 / NBRC 15305 / NCIMB 9373 / NCTC 2599 / NRRL B-3711</strain>
    </source>
</reference>
<proteinExistence type="inferred from homology"/>
<accession>Q81AC5</accession>